<organism>
    <name type="scientific">Yersinia pseudotuberculosis serotype I (strain IP32953)</name>
    <dbReference type="NCBI Taxonomy" id="273123"/>
    <lineage>
        <taxon>Bacteria</taxon>
        <taxon>Pseudomonadati</taxon>
        <taxon>Pseudomonadota</taxon>
        <taxon>Gammaproteobacteria</taxon>
        <taxon>Enterobacterales</taxon>
        <taxon>Yersiniaceae</taxon>
        <taxon>Yersinia</taxon>
    </lineage>
</organism>
<reference key="1">
    <citation type="journal article" date="2004" name="Proc. Natl. Acad. Sci. U.S.A.">
        <title>Insights into the evolution of Yersinia pestis through whole-genome comparison with Yersinia pseudotuberculosis.</title>
        <authorList>
            <person name="Chain P.S.G."/>
            <person name="Carniel E."/>
            <person name="Larimer F.W."/>
            <person name="Lamerdin J."/>
            <person name="Stoutland P.O."/>
            <person name="Regala W.M."/>
            <person name="Georgescu A.M."/>
            <person name="Vergez L.M."/>
            <person name="Land M.L."/>
            <person name="Motin V.L."/>
            <person name="Brubaker R.R."/>
            <person name="Fowler J."/>
            <person name="Hinnebusch J."/>
            <person name="Marceau M."/>
            <person name="Medigue C."/>
            <person name="Simonet M."/>
            <person name="Chenal-Francisque V."/>
            <person name="Souza B."/>
            <person name="Dacheux D."/>
            <person name="Elliott J.M."/>
            <person name="Derbise A."/>
            <person name="Hauser L.J."/>
            <person name="Garcia E."/>
        </authorList>
    </citation>
    <scope>NUCLEOTIDE SEQUENCE [LARGE SCALE GENOMIC DNA]</scope>
    <source>
        <strain>IP32953</strain>
    </source>
</reference>
<comment type="function">
    <text evidence="1">Catalyzes the synthesis of GMP from XMP.</text>
</comment>
<comment type="catalytic activity">
    <reaction evidence="1">
        <text>XMP + L-glutamine + ATP + H2O = GMP + L-glutamate + AMP + diphosphate + 2 H(+)</text>
        <dbReference type="Rhea" id="RHEA:11680"/>
        <dbReference type="ChEBI" id="CHEBI:15377"/>
        <dbReference type="ChEBI" id="CHEBI:15378"/>
        <dbReference type="ChEBI" id="CHEBI:29985"/>
        <dbReference type="ChEBI" id="CHEBI:30616"/>
        <dbReference type="ChEBI" id="CHEBI:33019"/>
        <dbReference type="ChEBI" id="CHEBI:57464"/>
        <dbReference type="ChEBI" id="CHEBI:58115"/>
        <dbReference type="ChEBI" id="CHEBI:58359"/>
        <dbReference type="ChEBI" id="CHEBI:456215"/>
        <dbReference type="EC" id="6.3.5.2"/>
    </reaction>
</comment>
<comment type="pathway">
    <text evidence="1">Purine metabolism; GMP biosynthesis; GMP from XMP (L-Gln route): step 1/1.</text>
</comment>
<comment type="subunit">
    <text evidence="1">Homodimer.</text>
</comment>
<name>GUAA_YERPS</name>
<gene>
    <name evidence="1" type="primary">guaA</name>
    <name type="ordered locus">YPTB2832</name>
</gene>
<protein>
    <recommendedName>
        <fullName evidence="1">GMP synthase [glutamine-hydrolyzing]</fullName>
        <ecNumber evidence="1">6.3.5.2</ecNumber>
    </recommendedName>
    <alternativeName>
        <fullName evidence="1">GMP synthetase</fullName>
    </alternativeName>
    <alternativeName>
        <fullName evidence="1">Glutamine amidotransferase</fullName>
    </alternativeName>
</protein>
<accession>Q668A8</accession>
<proteinExistence type="inferred from homology"/>
<keyword id="KW-0067">ATP-binding</keyword>
<keyword id="KW-0315">Glutamine amidotransferase</keyword>
<keyword id="KW-0332">GMP biosynthesis</keyword>
<keyword id="KW-0436">Ligase</keyword>
<keyword id="KW-0547">Nucleotide-binding</keyword>
<keyword id="KW-0658">Purine biosynthesis</keyword>
<evidence type="ECO:0000255" key="1">
    <source>
        <dbReference type="HAMAP-Rule" id="MF_00344"/>
    </source>
</evidence>
<dbReference type="EC" id="6.3.5.2" evidence="1"/>
<dbReference type="EMBL" id="BX936398">
    <property type="protein sequence ID" value="CAH22070.1"/>
    <property type="molecule type" value="Genomic_DNA"/>
</dbReference>
<dbReference type="RefSeq" id="WP_011192796.1">
    <property type="nucleotide sequence ID" value="NC_006155.1"/>
</dbReference>
<dbReference type="SMR" id="Q668A8"/>
<dbReference type="MEROPS" id="C26.957"/>
<dbReference type="GeneID" id="49785158"/>
<dbReference type="KEGG" id="ypo:BZ17_3799"/>
<dbReference type="KEGG" id="yps:YPTB2832"/>
<dbReference type="PATRIC" id="fig|273123.14.peg.3986"/>
<dbReference type="UniPathway" id="UPA00189">
    <property type="reaction ID" value="UER00296"/>
</dbReference>
<dbReference type="Proteomes" id="UP000001011">
    <property type="component" value="Chromosome"/>
</dbReference>
<dbReference type="GO" id="GO:0005829">
    <property type="term" value="C:cytosol"/>
    <property type="evidence" value="ECO:0007669"/>
    <property type="project" value="TreeGrafter"/>
</dbReference>
<dbReference type="GO" id="GO:0005524">
    <property type="term" value="F:ATP binding"/>
    <property type="evidence" value="ECO:0007669"/>
    <property type="project" value="UniProtKB-UniRule"/>
</dbReference>
<dbReference type="GO" id="GO:0003921">
    <property type="term" value="F:GMP synthase activity"/>
    <property type="evidence" value="ECO:0007669"/>
    <property type="project" value="InterPro"/>
</dbReference>
<dbReference type="CDD" id="cd01742">
    <property type="entry name" value="GATase1_GMP_Synthase"/>
    <property type="match status" value="1"/>
</dbReference>
<dbReference type="CDD" id="cd01997">
    <property type="entry name" value="GMP_synthase_C"/>
    <property type="match status" value="1"/>
</dbReference>
<dbReference type="FunFam" id="3.30.300.10:FF:000002">
    <property type="entry name" value="GMP synthase [glutamine-hydrolyzing]"/>
    <property type="match status" value="1"/>
</dbReference>
<dbReference type="FunFam" id="3.40.50.620:FF:000001">
    <property type="entry name" value="GMP synthase [glutamine-hydrolyzing]"/>
    <property type="match status" value="1"/>
</dbReference>
<dbReference type="FunFam" id="3.40.50.880:FF:000001">
    <property type="entry name" value="GMP synthase [glutamine-hydrolyzing]"/>
    <property type="match status" value="1"/>
</dbReference>
<dbReference type="Gene3D" id="3.30.300.10">
    <property type="match status" value="1"/>
</dbReference>
<dbReference type="Gene3D" id="3.40.50.880">
    <property type="match status" value="1"/>
</dbReference>
<dbReference type="Gene3D" id="3.40.50.620">
    <property type="entry name" value="HUPs"/>
    <property type="match status" value="1"/>
</dbReference>
<dbReference type="HAMAP" id="MF_00344">
    <property type="entry name" value="GMP_synthase"/>
    <property type="match status" value="1"/>
</dbReference>
<dbReference type="InterPro" id="IPR029062">
    <property type="entry name" value="Class_I_gatase-like"/>
</dbReference>
<dbReference type="InterPro" id="IPR017926">
    <property type="entry name" value="GATASE"/>
</dbReference>
<dbReference type="InterPro" id="IPR001674">
    <property type="entry name" value="GMP_synth_C"/>
</dbReference>
<dbReference type="InterPro" id="IPR004739">
    <property type="entry name" value="GMP_synth_GATase"/>
</dbReference>
<dbReference type="InterPro" id="IPR022955">
    <property type="entry name" value="GMP_synthase"/>
</dbReference>
<dbReference type="InterPro" id="IPR025777">
    <property type="entry name" value="GMPS_ATP_PPase_dom"/>
</dbReference>
<dbReference type="InterPro" id="IPR022310">
    <property type="entry name" value="NAD/GMP_synthase"/>
</dbReference>
<dbReference type="InterPro" id="IPR014729">
    <property type="entry name" value="Rossmann-like_a/b/a_fold"/>
</dbReference>
<dbReference type="NCBIfam" id="TIGR00884">
    <property type="entry name" value="guaA_Cterm"/>
    <property type="match status" value="1"/>
</dbReference>
<dbReference type="NCBIfam" id="TIGR00888">
    <property type="entry name" value="guaA_Nterm"/>
    <property type="match status" value="1"/>
</dbReference>
<dbReference type="NCBIfam" id="NF000848">
    <property type="entry name" value="PRK00074.1"/>
    <property type="match status" value="1"/>
</dbReference>
<dbReference type="PANTHER" id="PTHR11922:SF2">
    <property type="entry name" value="GMP SYNTHASE [GLUTAMINE-HYDROLYZING]"/>
    <property type="match status" value="1"/>
</dbReference>
<dbReference type="PANTHER" id="PTHR11922">
    <property type="entry name" value="GMP SYNTHASE-RELATED"/>
    <property type="match status" value="1"/>
</dbReference>
<dbReference type="Pfam" id="PF00117">
    <property type="entry name" value="GATase"/>
    <property type="match status" value="1"/>
</dbReference>
<dbReference type="Pfam" id="PF00958">
    <property type="entry name" value="GMP_synt_C"/>
    <property type="match status" value="1"/>
</dbReference>
<dbReference type="Pfam" id="PF02540">
    <property type="entry name" value="NAD_synthase"/>
    <property type="match status" value="1"/>
</dbReference>
<dbReference type="PRINTS" id="PR00097">
    <property type="entry name" value="ANTSNTHASEII"/>
</dbReference>
<dbReference type="PRINTS" id="PR00096">
    <property type="entry name" value="GATASE"/>
</dbReference>
<dbReference type="SUPFAM" id="SSF52402">
    <property type="entry name" value="Adenine nucleotide alpha hydrolases-like"/>
    <property type="match status" value="1"/>
</dbReference>
<dbReference type="SUPFAM" id="SSF52317">
    <property type="entry name" value="Class I glutamine amidotransferase-like"/>
    <property type="match status" value="1"/>
</dbReference>
<dbReference type="SUPFAM" id="SSF54810">
    <property type="entry name" value="GMP synthetase C-terminal dimerisation domain"/>
    <property type="match status" value="1"/>
</dbReference>
<dbReference type="PROSITE" id="PS51273">
    <property type="entry name" value="GATASE_TYPE_1"/>
    <property type="match status" value="1"/>
</dbReference>
<dbReference type="PROSITE" id="PS51553">
    <property type="entry name" value="GMPS_ATP_PPASE"/>
    <property type="match status" value="1"/>
</dbReference>
<sequence length="525" mass="58392">MTKNIHKHRILILDFGSQYTQLLARRVREIGVYCELWAWDVTEAQIREFNPSGIILSGSPESTIENGSPRAPDYVFTAGVPVLGVCYGMQTMAIQLGGKVESSNQREFGYAQVEIKADSALIRDIKDAINPAGEAVLDVWMSHGDKVAEIPADFVTVASTDTCPFAIMANEEKRFYGVQFHPEVTHTKQGLRLLERFVLGICGCEALWTSATIIEDAIVRLREQIGDDHVILGLSGGVDSSVTAMLLHRAIGKRLTCVFVDNGLLRLNEADQVLEMFGDKFGLNIVHVAAEDRFLSALAGVDEPEAKRKIIGRVFVELFDEEACKQEQVKWLAQGTIYPDVIESAASATGKAHVIKSHHNVGGLPKEMKLGLVEPLKELFKDEVRKIGLELGLPYDMLYRHPFPGPGLGVRVLGEVKKEYCDLLRRADAIFIEELHKADLYNKVSQAFTVFLPVRSVGVMGDGRKYDWVVSLRAVETVDFMTAHWAHLPYDFLGRVSNRIINEVNGISRVVYDISGKPPATIEWE</sequence>
<feature type="chain" id="PRO_0000229491" description="GMP synthase [glutamine-hydrolyzing]">
    <location>
        <begin position="1"/>
        <end position="525"/>
    </location>
</feature>
<feature type="domain" description="Glutamine amidotransferase type-1" evidence="1">
    <location>
        <begin position="9"/>
        <end position="207"/>
    </location>
</feature>
<feature type="domain" description="GMPS ATP-PPase" evidence="1">
    <location>
        <begin position="208"/>
        <end position="400"/>
    </location>
</feature>
<feature type="active site" description="Nucleophile" evidence="1">
    <location>
        <position position="86"/>
    </location>
</feature>
<feature type="active site" evidence="1">
    <location>
        <position position="181"/>
    </location>
</feature>
<feature type="active site" evidence="1">
    <location>
        <position position="183"/>
    </location>
</feature>
<feature type="binding site" evidence="1">
    <location>
        <begin position="235"/>
        <end position="241"/>
    </location>
    <ligand>
        <name>ATP</name>
        <dbReference type="ChEBI" id="CHEBI:30616"/>
    </ligand>
</feature>